<proteinExistence type="inferred from homology"/>
<keyword id="KW-0030">Aminoacyl-tRNA synthetase</keyword>
<keyword id="KW-0067">ATP-binding</keyword>
<keyword id="KW-0963">Cytoplasm</keyword>
<keyword id="KW-0436">Ligase</keyword>
<keyword id="KW-0460">Magnesium</keyword>
<keyword id="KW-0479">Metal-binding</keyword>
<keyword id="KW-0547">Nucleotide-binding</keyword>
<keyword id="KW-0648">Protein biosynthesis</keyword>
<keyword id="KW-1185">Reference proteome</keyword>
<dbReference type="EC" id="6.1.1.6" evidence="1"/>
<dbReference type="EMBL" id="AL591974">
    <property type="protein sequence ID" value="CAD00755.1"/>
    <property type="molecule type" value="Genomic_DNA"/>
</dbReference>
<dbReference type="PIR" id="AE1103">
    <property type="entry name" value="AE1103"/>
</dbReference>
<dbReference type="RefSeq" id="NP_463759.1">
    <property type="nucleotide sequence ID" value="NC_003210.1"/>
</dbReference>
<dbReference type="RefSeq" id="WP_010989378.1">
    <property type="nucleotide sequence ID" value="NZ_CP149495.1"/>
</dbReference>
<dbReference type="SMR" id="Q8YAB8"/>
<dbReference type="STRING" id="169963.gene:17592864"/>
<dbReference type="PaxDb" id="169963-lmo0228"/>
<dbReference type="EnsemblBacteria" id="CAD00755">
    <property type="protein sequence ID" value="CAD00755"/>
    <property type="gene ID" value="CAD00755"/>
</dbReference>
<dbReference type="GeneID" id="987100"/>
<dbReference type="KEGG" id="lmo:lmo0228"/>
<dbReference type="PATRIC" id="fig|169963.11.peg.236"/>
<dbReference type="eggNOG" id="COG1190">
    <property type="taxonomic scope" value="Bacteria"/>
</dbReference>
<dbReference type="HOGENOM" id="CLU_008255_6_0_9"/>
<dbReference type="OrthoDB" id="9801152at2"/>
<dbReference type="PhylomeDB" id="Q8YAB8"/>
<dbReference type="BioCyc" id="LMON169963:LMO0228-MONOMER"/>
<dbReference type="Proteomes" id="UP000000817">
    <property type="component" value="Chromosome"/>
</dbReference>
<dbReference type="GO" id="GO:0005737">
    <property type="term" value="C:cytoplasm"/>
    <property type="evidence" value="ECO:0000318"/>
    <property type="project" value="GO_Central"/>
</dbReference>
<dbReference type="GO" id="GO:0005829">
    <property type="term" value="C:cytosol"/>
    <property type="evidence" value="ECO:0000318"/>
    <property type="project" value="GO_Central"/>
</dbReference>
<dbReference type="GO" id="GO:0005524">
    <property type="term" value="F:ATP binding"/>
    <property type="evidence" value="ECO:0007669"/>
    <property type="project" value="UniProtKB-UniRule"/>
</dbReference>
<dbReference type="GO" id="GO:0140096">
    <property type="term" value="F:catalytic activity, acting on a protein"/>
    <property type="evidence" value="ECO:0007669"/>
    <property type="project" value="UniProtKB-ARBA"/>
</dbReference>
<dbReference type="GO" id="GO:0004824">
    <property type="term" value="F:lysine-tRNA ligase activity"/>
    <property type="evidence" value="ECO:0000318"/>
    <property type="project" value="GO_Central"/>
</dbReference>
<dbReference type="GO" id="GO:0000287">
    <property type="term" value="F:magnesium ion binding"/>
    <property type="evidence" value="ECO:0007669"/>
    <property type="project" value="UniProtKB-UniRule"/>
</dbReference>
<dbReference type="GO" id="GO:0016740">
    <property type="term" value="F:transferase activity"/>
    <property type="evidence" value="ECO:0007669"/>
    <property type="project" value="UniProtKB-ARBA"/>
</dbReference>
<dbReference type="GO" id="GO:0000049">
    <property type="term" value="F:tRNA binding"/>
    <property type="evidence" value="ECO:0000318"/>
    <property type="project" value="GO_Central"/>
</dbReference>
<dbReference type="GO" id="GO:0006430">
    <property type="term" value="P:lysyl-tRNA aminoacylation"/>
    <property type="evidence" value="ECO:0000318"/>
    <property type="project" value="GO_Central"/>
</dbReference>
<dbReference type="CDD" id="cd00775">
    <property type="entry name" value="LysRS_core"/>
    <property type="match status" value="1"/>
</dbReference>
<dbReference type="CDD" id="cd04322">
    <property type="entry name" value="LysRS_N"/>
    <property type="match status" value="1"/>
</dbReference>
<dbReference type="FunFam" id="2.40.50.140:FF:000024">
    <property type="entry name" value="Lysine--tRNA ligase"/>
    <property type="match status" value="1"/>
</dbReference>
<dbReference type="FunFam" id="3.30.930.10:FF:000001">
    <property type="entry name" value="Lysine--tRNA ligase"/>
    <property type="match status" value="1"/>
</dbReference>
<dbReference type="Gene3D" id="3.30.930.10">
    <property type="entry name" value="Bira Bifunctional Protein, Domain 2"/>
    <property type="match status" value="1"/>
</dbReference>
<dbReference type="Gene3D" id="2.40.50.140">
    <property type="entry name" value="Nucleic acid-binding proteins"/>
    <property type="match status" value="1"/>
</dbReference>
<dbReference type="HAMAP" id="MF_00252">
    <property type="entry name" value="Lys_tRNA_synth_class2"/>
    <property type="match status" value="1"/>
</dbReference>
<dbReference type="InterPro" id="IPR004364">
    <property type="entry name" value="Aa-tRNA-synt_II"/>
</dbReference>
<dbReference type="InterPro" id="IPR006195">
    <property type="entry name" value="aa-tRNA-synth_II"/>
</dbReference>
<dbReference type="InterPro" id="IPR045864">
    <property type="entry name" value="aa-tRNA-synth_II/BPL/LPL"/>
</dbReference>
<dbReference type="InterPro" id="IPR002313">
    <property type="entry name" value="Lys-tRNA-ligase_II"/>
</dbReference>
<dbReference type="InterPro" id="IPR034762">
    <property type="entry name" value="Lys-tRNA-ligase_II_bac/euk"/>
</dbReference>
<dbReference type="InterPro" id="IPR044136">
    <property type="entry name" value="Lys-tRNA-ligase_II_N"/>
</dbReference>
<dbReference type="InterPro" id="IPR018149">
    <property type="entry name" value="Lys-tRNA-synth_II_C"/>
</dbReference>
<dbReference type="InterPro" id="IPR012340">
    <property type="entry name" value="NA-bd_OB-fold"/>
</dbReference>
<dbReference type="InterPro" id="IPR004365">
    <property type="entry name" value="NA-bd_OB_tRNA"/>
</dbReference>
<dbReference type="NCBIfam" id="TIGR00499">
    <property type="entry name" value="lysS_bact"/>
    <property type="match status" value="1"/>
</dbReference>
<dbReference type="NCBIfam" id="NF001756">
    <property type="entry name" value="PRK00484.1"/>
    <property type="match status" value="1"/>
</dbReference>
<dbReference type="PANTHER" id="PTHR42918:SF15">
    <property type="entry name" value="LYSINE--TRNA LIGASE, CHLOROPLASTIC_MITOCHONDRIAL"/>
    <property type="match status" value="1"/>
</dbReference>
<dbReference type="PANTHER" id="PTHR42918">
    <property type="entry name" value="LYSYL-TRNA SYNTHETASE"/>
    <property type="match status" value="1"/>
</dbReference>
<dbReference type="Pfam" id="PF00152">
    <property type="entry name" value="tRNA-synt_2"/>
    <property type="match status" value="1"/>
</dbReference>
<dbReference type="Pfam" id="PF01336">
    <property type="entry name" value="tRNA_anti-codon"/>
    <property type="match status" value="1"/>
</dbReference>
<dbReference type="PIRSF" id="PIRSF039101">
    <property type="entry name" value="LysRS2"/>
    <property type="match status" value="1"/>
</dbReference>
<dbReference type="PRINTS" id="PR00982">
    <property type="entry name" value="TRNASYNTHLYS"/>
</dbReference>
<dbReference type="SUPFAM" id="SSF55681">
    <property type="entry name" value="Class II aaRS and biotin synthetases"/>
    <property type="match status" value="1"/>
</dbReference>
<dbReference type="SUPFAM" id="SSF50249">
    <property type="entry name" value="Nucleic acid-binding proteins"/>
    <property type="match status" value="1"/>
</dbReference>
<dbReference type="PROSITE" id="PS50862">
    <property type="entry name" value="AA_TRNA_LIGASE_II"/>
    <property type="match status" value="1"/>
</dbReference>
<comment type="catalytic activity">
    <reaction evidence="1">
        <text>tRNA(Lys) + L-lysine + ATP = L-lysyl-tRNA(Lys) + AMP + diphosphate</text>
        <dbReference type="Rhea" id="RHEA:20792"/>
        <dbReference type="Rhea" id="RHEA-COMP:9696"/>
        <dbReference type="Rhea" id="RHEA-COMP:9697"/>
        <dbReference type="ChEBI" id="CHEBI:30616"/>
        <dbReference type="ChEBI" id="CHEBI:32551"/>
        <dbReference type="ChEBI" id="CHEBI:33019"/>
        <dbReference type="ChEBI" id="CHEBI:78442"/>
        <dbReference type="ChEBI" id="CHEBI:78529"/>
        <dbReference type="ChEBI" id="CHEBI:456215"/>
        <dbReference type="EC" id="6.1.1.6"/>
    </reaction>
</comment>
<comment type="cofactor">
    <cofactor evidence="1">
        <name>Mg(2+)</name>
        <dbReference type="ChEBI" id="CHEBI:18420"/>
    </cofactor>
    <text evidence="1">Binds 3 Mg(2+) ions per subunit.</text>
</comment>
<comment type="subunit">
    <text evidence="1">Homodimer.</text>
</comment>
<comment type="subcellular location">
    <subcellularLocation>
        <location evidence="1">Cytoplasm</location>
    </subcellularLocation>
</comment>
<comment type="similarity">
    <text evidence="1">Belongs to the class-II aminoacyl-tRNA synthetase family.</text>
</comment>
<gene>
    <name evidence="1" type="primary">lysS</name>
    <name type="ordered locus">lmo0228</name>
</gene>
<feature type="chain" id="PRO_0000152644" description="Lysine--tRNA ligase">
    <location>
        <begin position="1"/>
        <end position="498"/>
    </location>
</feature>
<feature type="binding site" evidence="1">
    <location>
        <position position="408"/>
    </location>
    <ligand>
        <name>Mg(2+)</name>
        <dbReference type="ChEBI" id="CHEBI:18420"/>
        <label>1</label>
    </ligand>
</feature>
<feature type="binding site" evidence="1">
    <location>
        <position position="415"/>
    </location>
    <ligand>
        <name>Mg(2+)</name>
        <dbReference type="ChEBI" id="CHEBI:18420"/>
        <label>1</label>
    </ligand>
</feature>
<feature type="binding site" evidence="1">
    <location>
        <position position="415"/>
    </location>
    <ligand>
        <name>Mg(2+)</name>
        <dbReference type="ChEBI" id="CHEBI:18420"/>
        <label>2</label>
    </ligand>
</feature>
<name>SYK_LISMO</name>
<organism>
    <name type="scientific">Listeria monocytogenes serovar 1/2a (strain ATCC BAA-679 / EGD-e)</name>
    <dbReference type="NCBI Taxonomy" id="169963"/>
    <lineage>
        <taxon>Bacteria</taxon>
        <taxon>Bacillati</taxon>
        <taxon>Bacillota</taxon>
        <taxon>Bacilli</taxon>
        <taxon>Bacillales</taxon>
        <taxon>Listeriaceae</taxon>
        <taxon>Listeria</taxon>
    </lineage>
</organism>
<sequence length="498" mass="57438">MSNENHEELNDQLIVRREKVDTLREEGIDPFGEKFIRSISPEEIETKFADKSKEELEEAAIEVSVAGRIMTKRVKGKVGFTHIQDRFHQLQIYIRKDAIGEDAYAVFKLADLGDIIGIKGTIFRTNTGELSVKATEFTLLSKSLRPLPDKYHGLKDVEQRYRQRYLDLITNEESQNRFVMRSKILKYTRDYMDNQGFLEVETPVLHTIAGGAAAKPFITHHNALDMELYLRIALELHLKRLIVGGMDKVYEIGRVFRNEGTSTRHNPEFTMLESYAAYEDYEDVMDLVEGLVSTVCKQVNGTTEITYGEYKVDLTPNWRRIHMADAVKEYVGVDFWNVTSDEEARELAKKHDVPVTEHMTYGHILNEFFETYVEEKLIQPTFVYGHPVEISPLAKKNKEDERFTDRFELFIVGREHANAFSELNDPIDQRERFEAQMKEREQGNDEAHGMDADFLEALEYGLPPTGGLGIGIDRLVMLLTDAPSIRDILLFPTMKHRD</sequence>
<accession>Q8YAB8</accession>
<evidence type="ECO:0000255" key="1">
    <source>
        <dbReference type="HAMAP-Rule" id="MF_00252"/>
    </source>
</evidence>
<reference key="1">
    <citation type="journal article" date="2001" name="Science">
        <title>Comparative genomics of Listeria species.</title>
        <authorList>
            <person name="Glaser P."/>
            <person name="Frangeul L."/>
            <person name="Buchrieser C."/>
            <person name="Rusniok C."/>
            <person name="Amend A."/>
            <person name="Baquero F."/>
            <person name="Berche P."/>
            <person name="Bloecker H."/>
            <person name="Brandt P."/>
            <person name="Chakraborty T."/>
            <person name="Charbit A."/>
            <person name="Chetouani F."/>
            <person name="Couve E."/>
            <person name="de Daruvar A."/>
            <person name="Dehoux P."/>
            <person name="Domann E."/>
            <person name="Dominguez-Bernal G."/>
            <person name="Duchaud E."/>
            <person name="Durant L."/>
            <person name="Dussurget O."/>
            <person name="Entian K.-D."/>
            <person name="Fsihi H."/>
            <person name="Garcia-del Portillo F."/>
            <person name="Garrido P."/>
            <person name="Gautier L."/>
            <person name="Goebel W."/>
            <person name="Gomez-Lopez N."/>
            <person name="Hain T."/>
            <person name="Hauf J."/>
            <person name="Jackson D."/>
            <person name="Jones L.-M."/>
            <person name="Kaerst U."/>
            <person name="Kreft J."/>
            <person name="Kuhn M."/>
            <person name="Kunst F."/>
            <person name="Kurapkat G."/>
            <person name="Madueno E."/>
            <person name="Maitournam A."/>
            <person name="Mata Vicente J."/>
            <person name="Ng E."/>
            <person name="Nedjari H."/>
            <person name="Nordsiek G."/>
            <person name="Novella S."/>
            <person name="de Pablos B."/>
            <person name="Perez-Diaz J.-C."/>
            <person name="Purcell R."/>
            <person name="Remmel B."/>
            <person name="Rose M."/>
            <person name="Schlueter T."/>
            <person name="Simoes N."/>
            <person name="Tierrez A."/>
            <person name="Vazquez-Boland J.-A."/>
            <person name="Voss H."/>
            <person name="Wehland J."/>
            <person name="Cossart P."/>
        </authorList>
    </citation>
    <scope>NUCLEOTIDE SEQUENCE [LARGE SCALE GENOMIC DNA]</scope>
    <source>
        <strain>ATCC BAA-679 / EGD-e</strain>
    </source>
</reference>
<protein>
    <recommendedName>
        <fullName evidence="1">Lysine--tRNA ligase</fullName>
        <ecNumber evidence="1">6.1.1.6</ecNumber>
    </recommendedName>
    <alternativeName>
        <fullName evidence="1">Lysyl-tRNA synthetase</fullName>
        <shortName evidence="1">LysRS</shortName>
    </alternativeName>
</protein>